<reference key="1">
    <citation type="journal article" date="2003" name="Appl. Microbiol. Biotechnol.">
        <title>The Corynebacterium glutamicum genome: features and impacts on biotechnological processes.</title>
        <authorList>
            <person name="Ikeda M."/>
            <person name="Nakagawa S."/>
        </authorList>
    </citation>
    <scope>NUCLEOTIDE SEQUENCE [LARGE SCALE GENOMIC DNA]</scope>
    <source>
        <strain>ATCC 13032 / DSM 20300 / JCM 1318 / BCRC 11384 / CCUG 27702 / LMG 3730 / NBRC 12168 / NCIMB 10025 / NRRL B-2784 / 534</strain>
    </source>
</reference>
<reference key="2">
    <citation type="journal article" date="2003" name="J. Biotechnol.">
        <title>The complete Corynebacterium glutamicum ATCC 13032 genome sequence and its impact on the production of L-aspartate-derived amino acids and vitamins.</title>
        <authorList>
            <person name="Kalinowski J."/>
            <person name="Bathe B."/>
            <person name="Bartels D."/>
            <person name="Bischoff N."/>
            <person name="Bott M."/>
            <person name="Burkovski A."/>
            <person name="Dusch N."/>
            <person name="Eggeling L."/>
            <person name="Eikmanns B.J."/>
            <person name="Gaigalat L."/>
            <person name="Goesmann A."/>
            <person name="Hartmann M."/>
            <person name="Huthmacher K."/>
            <person name="Kraemer R."/>
            <person name="Linke B."/>
            <person name="McHardy A.C."/>
            <person name="Meyer F."/>
            <person name="Moeckel B."/>
            <person name="Pfefferle W."/>
            <person name="Puehler A."/>
            <person name="Rey D.A."/>
            <person name="Rueckert C."/>
            <person name="Rupp O."/>
            <person name="Sahm H."/>
            <person name="Wendisch V.F."/>
            <person name="Wiegraebe I."/>
            <person name="Tauch A."/>
        </authorList>
    </citation>
    <scope>NUCLEOTIDE SEQUENCE [LARGE SCALE GENOMIC DNA]</scope>
    <source>
        <strain>ATCC 13032 / DSM 20300 / JCM 1318 / BCRC 11384 / CCUG 27702 / LMG 3730 / NBRC 12168 / NCIMB 10025 / NRRL B-2784 / 534</strain>
    </source>
</reference>
<sequence length="243" mass="26183">MTTSSEQPRTGYKRVMLKLGGEMFGGGKVGVDPDVVDNVARQIAEVAKTGAEIAVVIGGGNFFRGAELQQRGMDRARSDYMGMLGTVMNCLALQDFLGQHGVECRVQTAINMAQVAEPYLPLRAERHLEKGRVVIFGAGMGMPYFSTDTTAAQRALEIGCDVLLMAKAVDGVYSDDPRTNPDAELFTEITPKEVIEKGLKVADATAFSLCMDNKMPILVFNLLTEGNIARAISGERIGTLVES</sequence>
<organism>
    <name type="scientific">Corynebacterium glutamicum (strain ATCC 13032 / DSM 20300 / JCM 1318 / BCRC 11384 / CCUG 27702 / LMG 3730 / NBRC 12168 / NCIMB 10025 / NRRL B-2784 / 534)</name>
    <dbReference type="NCBI Taxonomy" id="196627"/>
    <lineage>
        <taxon>Bacteria</taxon>
        <taxon>Bacillati</taxon>
        <taxon>Actinomycetota</taxon>
        <taxon>Actinomycetes</taxon>
        <taxon>Mycobacteriales</taxon>
        <taxon>Corynebacteriaceae</taxon>
        <taxon>Corynebacterium</taxon>
    </lineage>
</organism>
<name>PYRH_CORGL</name>
<comment type="function">
    <text evidence="1">Catalyzes the reversible phosphorylation of UMP to UDP.</text>
</comment>
<comment type="catalytic activity">
    <reaction evidence="1">
        <text>UMP + ATP = UDP + ADP</text>
        <dbReference type="Rhea" id="RHEA:24400"/>
        <dbReference type="ChEBI" id="CHEBI:30616"/>
        <dbReference type="ChEBI" id="CHEBI:57865"/>
        <dbReference type="ChEBI" id="CHEBI:58223"/>
        <dbReference type="ChEBI" id="CHEBI:456216"/>
        <dbReference type="EC" id="2.7.4.22"/>
    </reaction>
</comment>
<comment type="activity regulation">
    <text evidence="1">Inhibited by UTP.</text>
</comment>
<comment type="pathway">
    <text evidence="1">Pyrimidine metabolism; CTP biosynthesis via de novo pathway; UDP from UMP (UMPK route): step 1/1.</text>
</comment>
<comment type="subunit">
    <text evidence="1">Homohexamer.</text>
</comment>
<comment type="subcellular location">
    <subcellularLocation>
        <location evidence="1">Cytoplasm</location>
    </subcellularLocation>
</comment>
<comment type="similarity">
    <text evidence="1">Belongs to the UMP kinase family.</text>
</comment>
<evidence type="ECO:0000255" key="1">
    <source>
        <dbReference type="HAMAP-Rule" id="MF_01220"/>
    </source>
</evidence>
<proteinExistence type="inferred from homology"/>
<keyword id="KW-0067">ATP-binding</keyword>
<keyword id="KW-0963">Cytoplasm</keyword>
<keyword id="KW-0418">Kinase</keyword>
<keyword id="KW-0547">Nucleotide-binding</keyword>
<keyword id="KW-0665">Pyrimidine biosynthesis</keyword>
<keyword id="KW-1185">Reference proteome</keyword>
<keyword id="KW-0808">Transferase</keyword>
<protein>
    <recommendedName>
        <fullName evidence="1">Uridylate kinase</fullName>
        <shortName evidence="1">UK</shortName>
        <ecNumber evidence="1">2.7.4.22</ecNumber>
    </recommendedName>
    <alternativeName>
        <fullName evidence="1">Uridine monophosphate kinase</fullName>
        <shortName evidence="1">UMP kinase</shortName>
        <shortName evidence="1">UMPK</shortName>
    </alternativeName>
</protein>
<dbReference type="EC" id="2.7.4.22" evidence="1"/>
<dbReference type="EMBL" id="BA000036">
    <property type="protein sequence ID" value="BAB99417.1"/>
    <property type="molecule type" value="Genomic_DNA"/>
</dbReference>
<dbReference type="EMBL" id="BX927154">
    <property type="protein sequence ID" value="CAF20364.1"/>
    <property type="molecule type" value="Genomic_DNA"/>
</dbReference>
<dbReference type="RefSeq" id="NP_601229.2">
    <property type="nucleotide sequence ID" value="NC_003450.3"/>
</dbReference>
<dbReference type="RefSeq" id="WP_006284182.1">
    <property type="nucleotide sequence ID" value="NC_006958.1"/>
</dbReference>
<dbReference type="SMR" id="P59004"/>
<dbReference type="STRING" id="196627.cg2218"/>
<dbReference type="GeneID" id="1019980"/>
<dbReference type="KEGG" id="cgb:cg2218"/>
<dbReference type="KEGG" id="cgl:Cgl2024"/>
<dbReference type="PATRIC" id="fig|196627.13.peg.1962"/>
<dbReference type="eggNOG" id="COG0528">
    <property type="taxonomic scope" value="Bacteria"/>
</dbReference>
<dbReference type="HOGENOM" id="CLU_033861_0_0_11"/>
<dbReference type="OrthoDB" id="9807458at2"/>
<dbReference type="BioCyc" id="CORYNE:G18NG-11616-MONOMER"/>
<dbReference type="UniPathway" id="UPA00159">
    <property type="reaction ID" value="UER00275"/>
</dbReference>
<dbReference type="Proteomes" id="UP000000582">
    <property type="component" value="Chromosome"/>
</dbReference>
<dbReference type="Proteomes" id="UP000001009">
    <property type="component" value="Chromosome"/>
</dbReference>
<dbReference type="GO" id="GO:0005737">
    <property type="term" value="C:cytoplasm"/>
    <property type="evidence" value="ECO:0007669"/>
    <property type="project" value="UniProtKB-SubCell"/>
</dbReference>
<dbReference type="GO" id="GO:0005524">
    <property type="term" value="F:ATP binding"/>
    <property type="evidence" value="ECO:0007669"/>
    <property type="project" value="UniProtKB-KW"/>
</dbReference>
<dbReference type="GO" id="GO:0033862">
    <property type="term" value="F:UMP kinase activity"/>
    <property type="evidence" value="ECO:0007669"/>
    <property type="project" value="UniProtKB-EC"/>
</dbReference>
<dbReference type="GO" id="GO:0044210">
    <property type="term" value="P:'de novo' CTP biosynthetic process"/>
    <property type="evidence" value="ECO:0007669"/>
    <property type="project" value="UniProtKB-UniRule"/>
</dbReference>
<dbReference type="GO" id="GO:0006225">
    <property type="term" value="P:UDP biosynthetic process"/>
    <property type="evidence" value="ECO:0007669"/>
    <property type="project" value="TreeGrafter"/>
</dbReference>
<dbReference type="CDD" id="cd04254">
    <property type="entry name" value="AAK_UMPK-PyrH-Ec"/>
    <property type="match status" value="1"/>
</dbReference>
<dbReference type="FunFam" id="3.40.1160.10:FF:000001">
    <property type="entry name" value="Uridylate kinase"/>
    <property type="match status" value="1"/>
</dbReference>
<dbReference type="Gene3D" id="3.40.1160.10">
    <property type="entry name" value="Acetylglutamate kinase-like"/>
    <property type="match status" value="1"/>
</dbReference>
<dbReference type="HAMAP" id="MF_01220_B">
    <property type="entry name" value="PyrH_B"/>
    <property type="match status" value="1"/>
</dbReference>
<dbReference type="InterPro" id="IPR036393">
    <property type="entry name" value="AceGlu_kinase-like_sf"/>
</dbReference>
<dbReference type="InterPro" id="IPR001048">
    <property type="entry name" value="Asp/Glu/Uridylate_kinase"/>
</dbReference>
<dbReference type="InterPro" id="IPR011817">
    <property type="entry name" value="Uridylate_kinase"/>
</dbReference>
<dbReference type="InterPro" id="IPR015963">
    <property type="entry name" value="Uridylate_kinase_bac"/>
</dbReference>
<dbReference type="NCBIfam" id="TIGR02075">
    <property type="entry name" value="pyrH_bact"/>
    <property type="match status" value="1"/>
</dbReference>
<dbReference type="PANTHER" id="PTHR42833">
    <property type="entry name" value="URIDYLATE KINASE"/>
    <property type="match status" value="1"/>
</dbReference>
<dbReference type="PANTHER" id="PTHR42833:SF4">
    <property type="entry name" value="URIDYLATE KINASE PUMPKIN, CHLOROPLASTIC"/>
    <property type="match status" value="1"/>
</dbReference>
<dbReference type="Pfam" id="PF00696">
    <property type="entry name" value="AA_kinase"/>
    <property type="match status" value="1"/>
</dbReference>
<dbReference type="PIRSF" id="PIRSF005650">
    <property type="entry name" value="Uridylate_kin"/>
    <property type="match status" value="1"/>
</dbReference>
<dbReference type="SUPFAM" id="SSF53633">
    <property type="entry name" value="Carbamate kinase-like"/>
    <property type="match status" value="1"/>
</dbReference>
<feature type="chain" id="PRO_0000143840" description="Uridylate kinase">
    <location>
        <begin position="1"/>
        <end position="243"/>
    </location>
</feature>
<feature type="binding site" evidence="1">
    <location>
        <begin position="18"/>
        <end position="21"/>
    </location>
    <ligand>
        <name>ATP</name>
        <dbReference type="ChEBI" id="CHEBI:30616"/>
    </ligand>
</feature>
<feature type="binding site" evidence="1">
    <location>
        <position position="59"/>
    </location>
    <ligand>
        <name>UMP</name>
        <dbReference type="ChEBI" id="CHEBI:57865"/>
    </ligand>
</feature>
<feature type="binding site" evidence="1">
    <location>
        <position position="60"/>
    </location>
    <ligand>
        <name>ATP</name>
        <dbReference type="ChEBI" id="CHEBI:30616"/>
    </ligand>
</feature>
<feature type="binding site" evidence="1">
    <location>
        <position position="64"/>
    </location>
    <ligand>
        <name>ATP</name>
        <dbReference type="ChEBI" id="CHEBI:30616"/>
    </ligand>
</feature>
<feature type="binding site" evidence="1">
    <location>
        <position position="79"/>
    </location>
    <ligand>
        <name>UMP</name>
        <dbReference type="ChEBI" id="CHEBI:57865"/>
    </ligand>
</feature>
<feature type="binding site" evidence="1">
    <location>
        <begin position="140"/>
        <end position="147"/>
    </location>
    <ligand>
        <name>UMP</name>
        <dbReference type="ChEBI" id="CHEBI:57865"/>
    </ligand>
</feature>
<feature type="binding site" evidence="1">
    <location>
        <position position="173"/>
    </location>
    <ligand>
        <name>ATP</name>
        <dbReference type="ChEBI" id="CHEBI:30616"/>
    </ligand>
</feature>
<feature type="binding site" evidence="1">
    <location>
        <position position="176"/>
    </location>
    <ligand>
        <name>ATP</name>
        <dbReference type="ChEBI" id="CHEBI:30616"/>
    </ligand>
</feature>
<gene>
    <name evidence="1" type="primary">pyrH</name>
    <name type="ordered locus">Cgl2024</name>
    <name type="ordered locus">cg2218</name>
</gene>
<accession>P59004</accession>